<protein>
    <recommendedName>
        <fullName evidence="1">Endoribonuclease YbeY</fullName>
        <ecNumber evidence="1">3.1.-.-</ecNumber>
    </recommendedName>
</protein>
<sequence length="154" mass="17649">MAIELDLQLAVENEEGLPSQQDFQLWLDKTIPLFQPQAEVTIRIVDEKESHALNHEYRGKDKPTNVLSFPFEAPPGMEIDLLGDLIICRQVVEKEAIEQNKPLLAHWAHMVVHGSLHLLGYDHIEDDEAEEMESLETEIMQGMGYEDPYIAEKE</sequence>
<comment type="function">
    <text evidence="1">Single strand-specific metallo-endoribonuclease involved in late-stage 70S ribosome quality control and in maturation of the 3' terminus of the 16S rRNA.</text>
</comment>
<comment type="cofactor">
    <cofactor evidence="1">
        <name>Zn(2+)</name>
        <dbReference type="ChEBI" id="CHEBI:29105"/>
    </cofactor>
    <text evidence="1">Binds 1 zinc ion.</text>
</comment>
<comment type="subcellular location">
    <subcellularLocation>
        <location evidence="1">Cytoplasm</location>
    </subcellularLocation>
</comment>
<comment type="similarity">
    <text evidence="1">Belongs to the endoribonuclease YbeY family.</text>
</comment>
<name>YBEY_VIBPA</name>
<reference key="1">
    <citation type="journal article" date="2003" name="Lancet">
        <title>Genome sequence of Vibrio parahaemolyticus: a pathogenic mechanism distinct from that of V. cholerae.</title>
        <authorList>
            <person name="Makino K."/>
            <person name="Oshima K."/>
            <person name="Kurokawa K."/>
            <person name="Yokoyama K."/>
            <person name="Uda T."/>
            <person name="Tagomori K."/>
            <person name="Iijima Y."/>
            <person name="Najima M."/>
            <person name="Nakano M."/>
            <person name="Yamashita A."/>
            <person name="Kubota Y."/>
            <person name="Kimura S."/>
            <person name="Yasunaga T."/>
            <person name="Honda T."/>
            <person name="Shinagawa H."/>
            <person name="Hattori M."/>
            <person name="Iida T."/>
        </authorList>
    </citation>
    <scope>NUCLEOTIDE SEQUENCE [LARGE SCALE GENOMIC DNA]</scope>
    <source>
        <strain>RIMD 2210633</strain>
    </source>
</reference>
<gene>
    <name evidence="1" type="primary">ybeY</name>
    <name type="ordered locus">VP0731</name>
</gene>
<keyword id="KW-0963">Cytoplasm</keyword>
<keyword id="KW-0255">Endonuclease</keyword>
<keyword id="KW-0378">Hydrolase</keyword>
<keyword id="KW-0479">Metal-binding</keyword>
<keyword id="KW-0540">Nuclease</keyword>
<keyword id="KW-0690">Ribosome biogenesis</keyword>
<keyword id="KW-0698">rRNA processing</keyword>
<keyword id="KW-0862">Zinc</keyword>
<evidence type="ECO:0000255" key="1">
    <source>
        <dbReference type="HAMAP-Rule" id="MF_00009"/>
    </source>
</evidence>
<proteinExistence type="inferred from homology"/>
<organism>
    <name type="scientific">Vibrio parahaemolyticus serotype O3:K6 (strain RIMD 2210633)</name>
    <dbReference type="NCBI Taxonomy" id="223926"/>
    <lineage>
        <taxon>Bacteria</taxon>
        <taxon>Pseudomonadati</taxon>
        <taxon>Pseudomonadota</taxon>
        <taxon>Gammaproteobacteria</taxon>
        <taxon>Vibrionales</taxon>
        <taxon>Vibrionaceae</taxon>
        <taxon>Vibrio</taxon>
    </lineage>
</organism>
<feature type="chain" id="PRO_0000102564" description="Endoribonuclease YbeY">
    <location>
        <begin position="1"/>
        <end position="154"/>
    </location>
</feature>
<feature type="binding site" evidence="1">
    <location>
        <position position="113"/>
    </location>
    <ligand>
        <name>Zn(2+)</name>
        <dbReference type="ChEBI" id="CHEBI:29105"/>
        <note>catalytic</note>
    </ligand>
</feature>
<feature type="binding site" evidence="1">
    <location>
        <position position="117"/>
    </location>
    <ligand>
        <name>Zn(2+)</name>
        <dbReference type="ChEBI" id="CHEBI:29105"/>
        <note>catalytic</note>
    </ligand>
</feature>
<feature type="binding site" evidence="1">
    <location>
        <position position="123"/>
    </location>
    <ligand>
        <name>Zn(2+)</name>
        <dbReference type="ChEBI" id="CHEBI:29105"/>
        <note>catalytic</note>
    </ligand>
</feature>
<dbReference type="EC" id="3.1.-.-" evidence="1"/>
<dbReference type="EMBL" id="BA000031">
    <property type="protein sequence ID" value="BAC58994.1"/>
    <property type="molecule type" value="Genomic_DNA"/>
</dbReference>
<dbReference type="RefSeq" id="NP_797110.1">
    <property type="nucleotide sequence ID" value="NC_004603.1"/>
</dbReference>
<dbReference type="RefSeq" id="WP_005483484.1">
    <property type="nucleotide sequence ID" value="NC_004603.1"/>
</dbReference>
<dbReference type="SMR" id="Q87RP6"/>
<dbReference type="GeneID" id="1188206"/>
<dbReference type="KEGG" id="vpa:VP0731"/>
<dbReference type="PATRIC" id="fig|223926.6.peg.700"/>
<dbReference type="eggNOG" id="COG0319">
    <property type="taxonomic scope" value="Bacteria"/>
</dbReference>
<dbReference type="HOGENOM" id="CLU_106710_0_1_6"/>
<dbReference type="Proteomes" id="UP000002493">
    <property type="component" value="Chromosome 1"/>
</dbReference>
<dbReference type="GO" id="GO:0005737">
    <property type="term" value="C:cytoplasm"/>
    <property type="evidence" value="ECO:0007669"/>
    <property type="project" value="UniProtKB-SubCell"/>
</dbReference>
<dbReference type="GO" id="GO:0004222">
    <property type="term" value="F:metalloendopeptidase activity"/>
    <property type="evidence" value="ECO:0007669"/>
    <property type="project" value="InterPro"/>
</dbReference>
<dbReference type="GO" id="GO:0004521">
    <property type="term" value="F:RNA endonuclease activity"/>
    <property type="evidence" value="ECO:0007669"/>
    <property type="project" value="UniProtKB-UniRule"/>
</dbReference>
<dbReference type="GO" id="GO:0008270">
    <property type="term" value="F:zinc ion binding"/>
    <property type="evidence" value="ECO:0007669"/>
    <property type="project" value="UniProtKB-UniRule"/>
</dbReference>
<dbReference type="GO" id="GO:0006364">
    <property type="term" value="P:rRNA processing"/>
    <property type="evidence" value="ECO:0007669"/>
    <property type="project" value="UniProtKB-UniRule"/>
</dbReference>
<dbReference type="Gene3D" id="3.40.390.30">
    <property type="entry name" value="Metalloproteases ('zincins'), catalytic domain"/>
    <property type="match status" value="1"/>
</dbReference>
<dbReference type="HAMAP" id="MF_00009">
    <property type="entry name" value="Endoribonucl_YbeY"/>
    <property type="match status" value="1"/>
</dbReference>
<dbReference type="InterPro" id="IPR023091">
    <property type="entry name" value="MetalPrtase_cat_dom_sf_prd"/>
</dbReference>
<dbReference type="InterPro" id="IPR002036">
    <property type="entry name" value="YbeY"/>
</dbReference>
<dbReference type="InterPro" id="IPR020549">
    <property type="entry name" value="YbeY_CS"/>
</dbReference>
<dbReference type="NCBIfam" id="TIGR00043">
    <property type="entry name" value="rRNA maturation RNase YbeY"/>
    <property type="match status" value="1"/>
</dbReference>
<dbReference type="PANTHER" id="PTHR46986">
    <property type="entry name" value="ENDORIBONUCLEASE YBEY, CHLOROPLASTIC"/>
    <property type="match status" value="1"/>
</dbReference>
<dbReference type="PANTHER" id="PTHR46986:SF1">
    <property type="entry name" value="ENDORIBONUCLEASE YBEY, CHLOROPLASTIC"/>
    <property type="match status" value="1"/>
</dbReference>
<dbReference type="Pfam" id="PF02130">
    <property type="entry name" value="YbeY"/>
    <property type="match status" value="1"/>
</dbReference>
<dbReference type="SUPFAM" id="SSF55486">
    <property type="entry name" value="Metalloproteases ('zincins'), catalytic domain"/>
    <property type="match status" value="1"/>
</dbReference>
<dbReference type="PROSITE" id="PS01306">
    <property type="entry name" value="UPF0054"/>
    <property type="match status" value="1"/>
</dbReference>
<accession>Q87RP6</accession>